<name>HISX_MYCTO</name>
<comment type="function">
    <text evidence="1">Catalyzes the sequential NAD-dependent oxidations of L-histidinol to L-histidinaldehyde and then to L-histidine.</text>
</comment>
<comment type="catalytic activity">
    <reaction>
        <text>L-histidinol + 2 NAD(+) + H2O = L-histidine + 2 NADH + 3 H(+)</text>
        <dbReference type="Rhea" id="RHEA:20641"/>
        <dbReference type="ChEBI" id="CHEBI:15377"/>
        <dbReference type="ChEBI" id="CHEBI:15378"/>
        <dbReference type="ChEBI" id="CHEBI:57540"/>
        <dbReference type="ChEBI" id="CHEBI:57595"/>
        <dbReference type="ChEBI" id="CHEBI:57699"/>
        <dbReference type="ChEBI" id="CHEBI:57945"/>
        <dbReference type="EC" id="1.1.1.23"/>
    </reaction>
</comment>
<comment type="cofactor">
    <cofactor evidence="1">
        <name>Zn(2+)</name>
        <dbReference type="ChEBI" id="CHEBI:29105"/>
    </cofactor>
    <text evidence="1">Binds 1 zinc ion per subunit.</text>
</comment>
<comment type="pathway">
    <text>Amino-acid biosynthesis; L-histidine biosynthesis; L-histidine from 5-phospho-alpha-D-ribose 1-diphosphate: step 9/9.</text>
</comment>
<comment type="subunit">
    <text evidence="1">Homodimer.</text>
</comment>
<comment type="similarity">
    <text evidence="4">Belongs to the histidinol dehydrogenase family.</text>
</comment>
<comment type="sequence caution" evidence="2">
    <conflict type="erroneous initiation">
        <sequence resource="EMBL-CDS" id="AAK45903"/>
    </conflict>
    <text>Extended N-terminus.</text>
</comment>
<keyword id="KW-0028">Amino-acid biosynthesis</keyword>
<keyword id="KW-0368">Histidine biosynthesis</keyword>
<keyword id="KW-0479">Metal-binding</keyword>
<keyword id="KW-0520">NAD</keyword>
<keyword id="KW-0560">Oxidoreductase</keyword>
<keyword id="KW-1185">Reference proteome</keyword>
<keyword id="KW-0862">Zinc</keyword>
<feature type="chain" id="PRO_0000427054" description="Histidinol dehydrogenase">
    <location>
        <begin position="1"/>
        <end position="444"/>
    </location>
</feature>
<feature type="active site" description="Proton acceptor" evidence="3">
    <location>
        <position position="341"/>
    </location>
</feature>
<feature type="active site" description="Proton acceptor" evidence="1">
    <location>
        <position position="342"/>
    </location>
</feature>
<feature type="binding site" evidence="3">
    <location>
        <position position="135"/>
    </location>
    <ligand>
        <name>NAD(+)</name>
        <dbReference type="ChEBI" id="CHEBI:57540"/>
    </ligand>
</feature>
<feature type="binding site" evidence="1">
    <location>
        <position position="199"/>
    </location>
    <ligand>
        <name>NAD(+)</name>
        <dbReference type="ChEBI" id="CHEBI:57540"/>
    </ligand>
</feature>
<feature type="binding site" evidence="1">
    <location>
        <position position="227"/>
    </location>
    <ligand>
        <name>NAD(+)</name>
        <dbReference type="ChEBI" id="CHEBI:57540"/>
    </ligand>
</feature>
<feature type="binding site" evidence="1">
    <location>
        <position position="250"/>
    </location>
    <ligand>
        <name>substrate</name>
    </ligand>
</feature>
<feature type="binding site" evidence="1">
    <location>
        <position position="272"/>
    </location>
    <ligand>
        <name>substrate</name>
    </ligand>
</feature>
<feature type="binding site" evidence="1">
    <location>
        <position position="272"/>
    </location>
    <ligand>
        <name>Zn(2+)</name>
        <dbReference type="ChEBI" id="CHEBI:29105"/>
    </ligand>
</feature>
<feature type="binding site" evidence="1">
    <location>
        <position position="275"/>
    </location>
    <ligand>
        <name>substrate</name>
    </ligand>
</feature>
<feature type="binding site" evidence="1">
    <location>
        <position position="275"/>
    </location>
    <ligand>
        <name>Zn(2+)</name>
        <dbReference type="ChEBI" id="CHEBI:29105"/>
    </ligand>
</feature>
<feature type="binding site" evidence="1">
    <location>
        <position position="342"/>
    </location>
    <ligand>
        <name>substrate</name>
    </ligand>
</feature>
<feature type="binding site" evidence="1">
    <location>
        <position position="375"/>
    </location>
    <ligand>
        <name>substrate</name>
    </ligand>
</feature>
<feature type="binding site" evidence="1">
    <location>
        <position position="375"/>
    </location>
    <ligand>
        <name>Zn(2+)</name>
        <dbReference type="ChEBI" id="CHEBI:29105"/>
    </ligand>
</feature>
<feature type="binding site" evidence="1">
    <location>
        <position position="429"/>
    </location>
    <ligand>
        <name>substrate</name>
    </ligand>
</feature>
<feature type="binding site" evidence="1">
    <location>
        <position position="434"/>
    </location>
    <ligand>
        <name>substrate</name>
    </ligand>
</feature>
<feature type="binding site" evidence="1">
    <location>
        <position position="434"/>
    </location>
    <ligand>
        <name>Zn(2+)</name>
        <dbReference type="ChEBI" id="CHEBI:29105"/>
    </ligand>
</feature>
<dbReference type="EC" id="1.1.1.23"/>
<dbReference type="EMBL" id="AE000516">
    <property type="protein sequence ID" value="AAK45903.1"/>
    <property type="status" value="ALT_INIT"/>
    <property type="molecule type" value="Genomic_DNA"/>
</dbReference>
<dbReference type="PIR" id="A70544">
    <property type="entry name" value="A70544"/>
</dbReference>
<dbReference type="SMR" id="P9WNW8"/>
<dbReference type="KEGG" id="mtc:MT1635"/>
<dbReference type="HOGENOM" id="CLU_006732_3_1_11"/>
<dbReference type="UniPathway" id="UPA00031">
    <property type="reaction ID" value="UER00014"/>
</dbReference>
<dbReference type="Proteomes" id="UP000001020">
    <property type="component" value="Chromosome"/>
</dbReference>
<dbReference type="GO" id="GO:0005829">
    <property type="term" value="C:cytosol"/>
    <property type="evidence" value="ECO:0007669"/>
    <property type="project" value="TreeGrafter"/>
</dbReference>
<dbReference type="GO" id="GO:0004399">
    <property type="term" value="F:histidinol dehydrogenase activity"/>
    <property type="evidence" value="ECO:0007669"/>
    <property type="project" value="UniProtKB-UniRule"/>
</dbReference>
<dbReference type="GO" id="GO:0051287">
    <property type="term" value="F:NAD binding"/>
    <property type="evidence" value="ECO:0007669"/>
    <property type="project" value="InterPro"/>
</dbReference>
<dbReference type="GO" id="GO:0008270">
    <property type="term" value="F:zinc ion binding"/>
    <property type="evidence" value="ECO:0007669"/>
    <property type="project" value="UniProtKB-UniRule"/>
</dbReference>
<dbReference type="GO" id="GO:0000105">
    <property type="term" value="P:L-histidine biosynthetic process"/>
    <property type="evidence" value="ECO:0007669"/>
    <property type="project" value="UniProtKB-UniRule"/>
</dbReference>
<dbReference type="CDD" id="cd06572">
    <property type="entry name" value="Histidinol_dh"/>
    <property type="match status" value="1"/>
</dbReference>
<dbReference type="FunFam" id="3.40.50.1980:FF:000001">
    <property type="entry name" value="Histidinol dehydrogenase"/>
    <property type="match status" value="1"/>
</dbReference>
<dbReference type="Gene3D" id="1.20.5.1300">
    <property type="match status" value="1"/>
</dbReference>
<dbReference type="Gene3D" id="3.40.50.1980">
    <property type="entry name" value="Nitrogenase molybdenum iron protein domain"/>
    <property type="match status" value="2"/>
</dbReference>
<dbReference type="HAMAP" id="MF_01024">
    <property type="entry name" value="HisD"/>
    <property type="match status" value="1"/>
</dbReference>
<dbReference type="InterPro" id="IPR016161">
    <property type="entry name" value="Ald_DH/histidinol_DH"/>
</dbReference>
<dbReference type="InterPro" id="IPR001692">
    <property type="entry name" value="Histidinol_DH_CS"/>
</dbReference>
<dbReference type="InterPro" id="IPR022695">
    <property type="entry name" value="Histidinol_DH_monofunct"/>
</dbReference>
<dbReference type="InterPro" id="IPR012131">
    <property type="entry name" value="Hstdl_DH"/>
</dbReference>
<dbReference type="NCBIfam" id="TIGR00069">
    <property type="entry name" value="hisD"/>
    <property type="match status" value="1"/>
</dbReference>
<dbReference type="PANTHER" id="PTHR21256:SF2">
    <property type="entry name" value="HISTIDINE BIOSYNTHESIS TRIFUNCTIONAL PROTEIN"/>
    <property type="match status" value="1"/>
</dbReference>
<dbReference type="PANTHER" id="PTHR21256">
    <property type="entry name" value="HISTIDINOL DEHYDROGENASE HDH"/>
    <property type="match status" value="1"/>
</dbReference>
<dbReference type="Pfam" id="PF00815">
    <property type="entry name" value="Histidinol_dh"/>
    <property type="match status" value="1"/>
</dbReference>
<dbReference type="PIRSF" id="PIRSF000099">
    <property type="entry name" value="Histidinol_dh"/>
    <property type="match status" value="1"/>
</dbReference>
<dbReference type="PRINTS" id="PR00083">
    <property type="entry name" value="HOLDHDRGNASE"/>
</dbReference>
<dbReference type="SUPFAM" id="SSF53720">
    <property type="entry name" value="ALDH-like"/>
    <property type="match status" value="1"/>
</dbReference>
<dbReference type="PROSITE" id="PS00611">
    <property type="entry name" value="HISOL_DEHYDROGENASE"/>
    <property type="match status" value="1"/>
</dbReference>
<organism>
    <name type="scientific">Mycobacterium tuberculosis (strain CDC 1551 / Oshkosh)</name>
    <dbReference type="NCBI Taxonomy" id="83331"/>
    <lineage>
        <taxon>Bacteria</taxon>
        <taxon>Bacillati</taxon>
        <taxon>Actinomycetota</taxon>
        <taxon>Actinomycetes</taxon>
        <taxon>Mycobacteriales</taxon>
        <taxon>Mycobacteriaceae</taxon>
        <taxon>Mycobacterium</taxon>
        <taxon>Mycobacterium tuberculosis complex</taxon>
    </lineage>
</organism>
<accession>P9WNW8</accession>
<accession>L0TA42</accession>
<accession>O08396</accession>
<accession>P63950</accession>
<proteinExistence type="inferred from homology"/>
<evidence type="ECO:0000250" key="1"/>
<evidence type="ECO:0000250" key="2">
    <source>
        <dbReference type="UniProtKB" id="P9WNW9"/>
    </source>
</evidence>
<evidence type="ECO:0000255" key="3"/>
<evidence type="ECO:0000305" key="4"/>
<protein>
    <recommendedName>
        <fullName>Histidinol dehydrogenase</fullName>
        <shortName>HDH</shortName>
        <ecNumber>1.1.1.23</ecNumber>
    </recommendedName>
</protein>
<gene>
    <name type="primary">hisD</name>
    <name type="ordered locus">MT1635</name>
</gene>
<reference key="1">
    <citation type="journal article" date="2002" name="J. Bacteriol.">
        <title>Whole-genome comparison of Mycobacterium tuberculosis clinical and laboratory strains.</title>
        <authorList>
            <person name="Fleischmann R.D."/>
            <person name="Alland D."/>
            <person name="Eisen J.A."/>
            <person name="Carpenter L."/>
            <person name="White O."/>
            <person name="Peterson J.D."/>
            <person name="DeBoy R.T."/>
            <person name="Dodson R.J."/>
            <person name="Gwinn M.L."/>
            <person name="Haft D.H."/>
            <person name="Hickey E.K."/>
            <person name="Kolonay J.F."/>
            <person name="Nelson W.C."/>
            <person name="Umayam L.A."/>
            <person name="Ermolaeva M.D."/>
            <person name="Salzberg S.L."/>
            <person name="Delcher A."/>
            <person name="Utterback T.R."/>
            <person name="Weidman J.F."/>
            <person name="Khouri H.M."/>
            <person name="Gill J."/>
            <person name="Mikula A."/>
            <person name="Bishai W."/>
            <person name="Jacobs W.R. Jr."/>
            <person name="Venter J.C."/>
            <person name="Fraser C.M."/>
        </authorList>
    </citation>
    <scope>NUCLEOTIDE SEQUENCE [LARGE SCALE GENOMIC DNA]</scope>
    <source>
        <strain>CDC 1551 / Oshkosh</strain>
    </source>
</reference>
<sequence>MTAPPPVLTRIDLRGAELTAAELRAALPRGGADVEAVLPTVRPIVAAVAERGAEAALDFGASFDGVRPHAIRVPDAALDAALAGLDCDVCEALQVMVERTRAVHSGQRRTDVTTTLGPGATVTERWVPVERVGLYVPGGNAVYPSSVVMNVVPAQAAGVDSLVVASPPQAQWDGMPHPTILAAARLLGVDEVWAVGGAQAVALLAYGGTDTDGAALTPVDMITGPGNIYVTAAKRLCRSRVGIDAEAGPTEIAILADHTADPVHVAADLISQAEHDELAASVLVTPSEDLADATDAELAGQLQTTVHRERVTAALTGRQSAIVLVDDVDAAVLVVNAYAAEHLEIQTADAPQVASRIRSAGAIFVGPWSPVSLGDYCAGSNHVLPTAGCARHSSGLSVQTFLRGIHVVEYTEAALKDVSGHVITLATAEDLPAHGEAVRRRFER</sequence>